<name>COAD_WOLWR</name>
<comment type="function">
    <text evidence="1">Reversibly transfers an adenylyl group from ATP to 4'-phosphopantetheine, yielding dephospho-CoA (dPCoA) and pyrophosphate.</text>
</comment>
<comment type="catalytic activity">
    <reaction evidence="1">
        <text>(R)-4'-phosphopantetheine + ATP + H(+) = 3'-dephospho-CoA + diphosphate</text>
        <dbReference type="Rhea" id="RHEA:19801"/>
        <dbReference type="ChEBI" id="CHEBI:15378"/>
        <dbReference type="ChEBI" id="CHEBI:30616"/>
        <dbReference type="ChEBI" id="CHEBI:33019"/>
        <dbReference type="ChEBI" id="CHEBI:57328"/>
        <dbReference type="ChEBI" id="CHEBI:61723"/>
        <dbReference type="EC" id="2.7.7.3"/>
    </reaction>
</comment>
<comment type="cofactor">
    <cofactor evidence="1">
        <name>Mg(2+)</name>
        <dbReference type="ChEBI" id="CHEBI:18420"/>
    </cofactor>
</comment>
<comment type="pathway">
    <text evidence="1">Cofactor biosynthesis; coenzyme A biosynthesis; CoA from (R)-pantothenate: step 4/5.</text>
</comment>
<comment type="subunit">
    <text evidence="1">Homohexamer.</text>
</comment>
<comment type="subcellular location">
    <subcellularLocation>
        <location evidence="1">Cytoplasm</location>
    </subcellularLocation>
</comment>
<comment type="similarity">
    <text evidence="1">Belongs to the bacterial CoaD family.</text>
</comment>
<gene>
    <name evidence="1" type="primary">coaD</name>
    <name type="ordered locus">WRi_003390</name>
</gene>
<protein>
    <recommendedName>
        <fullName evidence="1">Phosphopantetheine adenylyltransferase</fullName>
        <ecNumber evidence="1">2.7.7.3</ecNumber>
    </recommendedName>
    <alternativeName>
        <fullName evidence="1">Dephospho-CoA pyrophosphorylase</fullName>
    </alternativeName>
    <alternativeName>
        <fullName evidence="1">Pantetheine-phosphate adenylyltransferase</fullName>
        <shortName evidence="1">PPAT</shortName>
    </alternativeName>
</protein>
<organism>
    <name type="scientific">Wolbachia sp. subsp. Drosophila simulans (strain wRi)</name>
    <dbReference type="NCBI Taxonomy" id="66084"/>
    <lineage>
        <taxon>Bacteria</taxon>
        <taxon>Pseudomonadati</taxon>
        <taxon>Pseudomonadota</taxon>
        <taxon>Alphaproteobacteria</taxon>
        <taxon>Rickettsiales</taxon>
        <taxon>Anaplasmataceae</taxon>
        <taxon>Wolbachieae</taxon>
        <taxon>Wolbachia</taxon>
    </lineage>
</organism>
<accession>C0R2K8</accession>
<proteinExistence type="inferred from homology"/>
<keyword id="KW-0067">ATP-binding</keyword>
<keyword id="KW-0173">Coenzyme A biosynthesis</keyword>
<keyword id="KW-0963">Cytoplasm</keyword>
<keyword id="KW-0460">Magnesium</keyword>
<keyword id="KW-0547">Nucleotide-binding</keyword>
<keyword id="KW-0548">Nucleotidyltransferase</keyword>
<keyword id="KW-0808">Transferase</keyword>
<reference key="1">
    <citation type="journal article" date="2009" name="Proc. Natl. Acad. Sci. U.S.A.">
        <title>The mosaic genome structure of the Wolbachia wRi strain infecting Drosophila simulans.</title>
        <authorList>
            <person name="Klasson L."/>
            <person name="Westberg J."/>
            <person name="Sapountzis P."/>
            <person name="Naeslund K."/>
            <person name="Lutnaes Y."/>
            <person name="Darby A.C."/>
            <person name="Veneti Z."/>
            <person name="Chen L."/>
            <person name="Braig H.R."/>
            <person name="Garrett R."/>
            <person name="Bourtzis K."/>
            <person name="Andersson S.G."/>
        </authorList>
    </citation>
    <scope>NUCLEOTIDE SEQUENCE [LARGE SCALE GENOMIC DNA]</scope>
    <source>
        <strain>wRi</strain>
    </source>
</reference>
<feature type="chain" id="PRO_1000123314" description="Phosphopantetheine adenylyltransferase">
    <location>
        <begin position="1"/>
        <end position="168"/>
    </location>
</feature>
<feature type="binding site" evidence="1">
    <location>
        <begin position="13"/>
        <end position="14"/>
    </location>
    <ligand>
        <name>ATP</name>
        <dbReference type="ChEBI" id="CHEBI:30616"/>
    </ligand>
</feature>
<feature type="binding site" evidence="1">
    <location>
        <position position="13"/>
    </location>
    <ligand>
        <name>substrate</name>
    </ligand>
</feature>
<feature type="binding site" evidence="1">
    <location>
        <position position="21"/>
    </location>
    <ligand>
        <name>ATP</name>
        <dbReference type="ChEBI" id="CHEBI:30616"/>
    </ligand>
</feature>
<feature type="binding site" evidence="1">
    <location>
        <position position="45"/>
    </location>
    <ligand>
        <name>substrate</name>
    </ligand>
</feature>
<feature type="binding site" evidence="1">
    <location>
        <position position="78"/>
    </location>
    <ligand>
        <name>substrate</name>
    </ligand>
</feature>
<feature type="binding site" evidence="1">
    <location>
        <position position="92"/>
    </location>
    <ligand>
        <name>substrate</name>
    </ligand>
</feature>
<feature type="binding site" evidence="1">
    <location>
        <begin position="93"/>
        <end position="95"/>
    </location>
    <ligand>
        <name>ATP</name>
        <dbReference type="ChEBI" id="CHEBI:30616"/>
    </ligand>
</feature>
<feature type="binding site" evidence="1">
    <location>
        <position position="103"/>
    </location>
    <ligand>
        <name>ATP</name>
        <dbReference type="ChEBI" id="CHEBI:30616"/>
    </ligand>
</feature>
<feature type="binding site" evidence="1">
    <location>
        <begin position="128"/>
        <end position="134"/>
    </location>
    <ligand>
        <name>ATP</name>
        <dbReference type="ChEBI" id="CHEBI:30616"/>
    </ligand>
</feature>
<feature type="site" description="Transition state stabilizer" evidence="1">
    <location>
        <position position="21"/>
    </location>
</feature>
<dbReference type="EC" id="2.7.7.3" evidence="1"/>
<dbReference type="EMBL" id="CP001391">
    <property type="protein sequence ID" value="ACN95150.1"/>
    <property type="molecule type" value="Genomic_DNA"/>
</dbReference>
<dbReference type="RefSeq" id="WP_012673139.1">
    <property type="nucleotide sequence ID" value="NZ_MKIF01000165.1"/>
</dbReference>
<dbReference type="SMR" id="C0R2K8"/>
<dbReference type="STRING" id="66084.WRi_003390"/>
<dbReference type="KEGG" id="wri:WRi_003390"/>
<dbReference type="HOGENOM" id="CLU_100149_0_1_5"/>
<dbReference type="UniPathway" id="UPA00241">
    <property type="reaction ID" value="UER00355"/>
</dbReference>
<dbReference type="Proteomes" id="UP000001293">
    <property type="component" value="Chromosome"/>
</dbReference>
<dbReference type="GO" id="GO:0005737">
    <property type="term" value="C:cytoplasm"/>
    <property type="evidence" value="ECO:0007669"/>
    <property type="project" value="UniProtKB-SubCell"/>
</dbReference>
<dbReference type="GO" id="GO:0005524">
    <property type="term" value="F:ATP binding"/>
    <property type="evidence" value="ECO:0007669"/>
    <property type="project" value="UniProtKB-KW"/>
</dbReference>
<dbReference type="GO" id="GO:0004595">
    <property type="term" value="F:pantetheine-phosphate adenylyltransferase activity"/>
    <property type="evidence" value="ECO:0007669"/>
    <property type="project" value="UniProtKB-UniRule"/>
</dbReference>
<dbReference type="GO" id="GO:0015937">
    <property type="term" value="P:coenzyme A biosynthetic process"/>
    <property type="evidence" value="ECO:0007669"/>
    <property type="project" value="UniProtKB-UniRule"/>
</dbReference>
<dbReference type="CDD" id="cd02163">
    <property type="entry name" value="PPAT"/>
    <property type="match status" value="1"/>
</dbReference>
<dbReference type="Gene3D" id="3.40.50.620">
    <property type="entry name" value="HUPs"/>
    <property type="match status" value="1"/>
</dbReference>
<dbReference type="HAMAP" id="MF_00151">
    <property type="entry name" value="PPAT_bact"/>
    <property type="match status" value="1"/>
</dbReference>
<dbReference type="InterPro" id="IPR004821">
    <property type="entry name" value="Cyt_trans-like"/>
</dbReference>
<dbReference type="InterPro" id="IPR001980">
    <property type="entry name" value="PPAT"/>
</dbReference>
<dbReference type="InterPro" id="IPR014729">
    <property type="entry name" value="Rossmann-like_a/b/a_fold"/>
</dbReference>
<dbReference type="NCBIfam" id="TIGR01510">
    <property type="entry name" value="coaD_prev_kdtB"/>
    <property type="match status" value="1"/>
</dbReference>
<dbReference type="NCBIfam" id="TIGR00125">
    <property type="entry name" value="cyt_tran_rel"/>
    <property type="match status" value="1"/>
</dbReference>
<dbReference type="PANTHER" id="PTHR21342">
    <property type="entry name" value="PHOSPHOPANTETHEINE ADENYLYLTRANSFERASE"/>
    <property type="match status" value="1"/>
</dbReference>
<dbReference type="PANTHER" id="PTHR21342:SF1">
    <property type="entry name" value="PHOSPHOPANTETHEINE ADENYLYLTRANSFERASE"/>
    <property type="match status" value="1"/>
</dbReference>
<dbReference type="Pfam" id="PF01467">
    <property type="entry name" value="CTP_transf_like"/>
    <property type="match status" value="1"/>
</dbReference>
<dbReference type="PRINTS" id="PR01020">
    <property type="entry name" value="LPSBIOSNTHSS"/>
</dbReference>
<dbReference type="SUPFAM" id="SSF52374">
    <property type="entry name" value="Nucleotidylyl transferase"/>
    <property type="match status" value="1"/>
</dbReference>
<sequence>MNINDKIGIYPGTFDPITFGHLDIIKRACKLVDKLIIGVAENVNKHTAFDTKLRTSMAENEIKGLGIDADVISFNGLLVKFAKEQNASVIIRGLRAVSDFDYEFQMSWVNYKLLPEIETIFLPASEDTQFISSGFVKEIARLGEDVSKFVSKGVQNELINLNRIKNGE</sequence>
<evidence type="ECO:0000255" key="1">
    <source>
        <dbReference type="HAMAP-Rule" id="MF_00151"/>
    </source>
</evidence>